<keyword id="KW-1003">Cell membrane</keyword>
<keyword id="KW-0342">GTP-binding</keyword>
<keyword id="KW-0449">Lipoprotein</keyword>
<keyword id="KW-0472">Membrane</keyword>
<keyword id="KW-0488">Methylation</keyword>
<keyword id="KW-0547">Nucleotide-binding</keyword>
<keyword id="KW-0636">Prenylation</keyword>
<keyword id="KW-1185">Reference proteome</keyword>
<proteinExistence type="inferred from homology"/>
<name>RABT2_DICDI</name>
<feature type="chain" id="PRO_0000332770" description="Ras-related protein RabT2">
    <location>
        <begin position="1"/>
        <end position="215"/>
    </location>
</feature>
<feature type="propeptide" id="PRO_0000370837" description="Removed in mature form" evidence="2">
    <location>
        <begin position="216"/>
        <end position="218"/>
    </location>
</feature>
<feature type="short sequence motif" description="Effector region" evidence="1">
    <location>
        <begin position="54"/>
        <end position="61"/>
    </location>
</feature>
<feature type="binding site" evidence="1">
    <location>
        <begin position="32"/>
        <end position="39"/>
    </location>
    <ligand>
        <name>GTP</name>
        <dbReference type="ChEBI" id="CHEBI:37565"/>
    </ligand>
</feature>
<feature type="binding site" evidence="1">
    <location>
        <begin position="80"/>
        <end position="84"/>
    </location>
    <ligand>
        <name>GTP</name>
        <dbReference type="ChEBI" id="CHEBI:37565"/>
    </ligand>
</feature>
<feature type="binding site" evidence="1">
    <location>
        <begin position="140"/>
        <end position="143"/>
    </location>
    <ligand>
        <name>GTP</name>
        <dbReference type="ChEBI" id="CHEBI:37565"/>
    </ligand>
</feature>
<feature type="modified residue" description="Cysteine methyl ester" evidence="2">
    <location>
        <position position="215"/>
    </location>
</feature>
<feature type="lipid moiety-binding region" description="S-geranylgeranyl cysteine" evidence="1">
    <location>
        <position position="215"/>
    </location>
</feature>
<dbReference type="EMBL" id="AAFI02000005">
    <property type="protein sequence ID" value="EAL71981.1"/>
    <property type="molecule type" value="Genomic_DNA"/>
</dbReference>
<dbReference type="RefSeq" id="XP_645831.1">
    <property type="nucleotide sequence ID" value="XM_640739.1"/>
</dbReference>
<dbReference type="SMR" id="Q55EF0"/>
<dbReference type="STRING" id="44689.Q55EF0"/>
<dbReference type="PaxDb" id="44689-DDB0229416"/>
<dbReference type="EnsemblProtists" id="EAL71981">
    <property type="protein sequence ID" value="EAL71981"/>
    <property type="gene ID" value="DDB_G0269262"/>
</dbReference>
<dbReference type="GeneID" id="8616774"/>
<dbReference type="KEGG" id="ddi:DDB_G0269262"/>
<dbReference type="dictyBase" id="DDB_G0269262">
    <property type="gene designation" value="rabT2"/>
</dbReference>
<dbReference type="VEuPathDB" id="AmoebaDB:DDB_G0269262"/>
<dbReference type="eggNOG" id="KOG0084">
    <property type="taxonomic scope" value="Eukaryota"/>
</dbReference>
<dbReference type="HOGENOM" id="CLU_041217_10_6_1"/>
<dbReference type="InParanoid" id="Q55EF0"/>
<dbReference type="OMA" id="WDANSCE"/>
<dbReference type="PhylomeDB" id="Q55EF0"/>
<dbReference type="Reactome" id="R-DDI-6798695">
    <property type="pathway name" value="Neutrophil degranulation"/>
</dbReference>
<dbReference type="Reactome" id="R-DDI-6811438">
    <property type="pathway name" value="Intra-Golgi traffic"/>
</dbReference>
<dbReference type="Reactome" id="R-DDI-8873719">
    <property type="pathway name" value="RAB geranylgeranylation"/>
</dbReference>
<dbReference type="PRO" id="PR:Q55EF0"/>
<dbReference type="Proteomes" id="UP000002195">
    <property type="component" value="Chromosome 1"/>
</dbReference>
<dbReference type="GO" id="GO:0005886">
    <property type="term" value="C:plasma membrane"/>
    <property type="evidence" value="ECO:0007669"/>
    <property type="project" value="UniProtKB-SubCell"/>
</dbReference>
<dbReference type="GO" id="GO:0005525">
    <property type="term" value="F:GTP binding"/>
    <property type="evidence" value="ECO:0000318"/>
    <property type="project" value="GO_Central"/>
</dbReference>
<dbReference type="GO" id="GO:0003924">
    <property type="term" value="F:GTPase activity"/>
    <property type="evidence" value="ECO:0000318"/>
    <property type="project" value="GO_Central"/>
</dbReference>
<dbReference type="GO" id="GO:0016192">
    <property type="term" value="P:vesicle-mediated transport"/>
    <property type="evidence" value="ECO:0000318"/>
    <property type="project" value="GO_Central"/>
</dbReference>
<dbReference type="CDD" id="cd00154">
    <property type="entry name" value="Rab"/>
    <property type="match status" value="1"/>
</dbReference>
<dbReference type="FunFam" id="3.40.50.300:FF:004919">
    <property type="entry name" value="Ras-related protein RabT2"/>
    <property type="match status" value="1"/>
</dbReference>
<dbReference type="Gene3D" id="3.40.50.300">
    <property type="entry name" value="P-loop containing nucleotide triphosphate hydrolases"/>
    <property type="match status" value="1"/>
</dbReference>
<dbReference type="InterPro" id="IPR027417">
    <property type="entry name" value="P-loop_NTPase"/>
</dbReference>
<dbReference type="InterPro" id="IPR050227">
    <property type="entry name" value="Rab"/>
</dbReference>
<dbReference type="InterPro" id="IPR005225">
    <property type="entry name" value="Small_GTP-bd"/>
</dbReference>
<dbReference type="InterPro" id="IPR001806">
    <property type="entry name" value="Small_GTPase"/>
</dbReference>
<dbReference type="NCBIfam" id="TIGR00231">
    <property type="entry name" value="small_GTP"/>
    <property type="match status" value="1"/>
</dbReference>
<dbReference type="PANTHER" id="PTHR47977">
    <property type="entry name" value="RAS-RELATED PROTEIN RAB"/>
    <property type="match status" value="1"/>
</dbReference>
<dbReference type="Pfam" id="PF00071">
    <property type="entry name" value="Ras"/>
    <property type="match status" value="1"/>
</dbReference>
<dbReference type="PRINTS" id="PR00449">
    <property type="entry name" value="RASTRNSFRMNG"/>
</dbReference>
<dbReference type="SMART" id="SM00175">
    <property type="entry name" value="RAB"/>
    <property type="match status" value="1"/>
</dbReference>
<dbReference type="SMART" id="SM00173">
    <property type="entry name" value="RAS"/>
    <property type="match status" value="1"/>
</dbReference>
<dbReference type="SMART" id="SM00174">
    <property type="entry name" value="RHO"/>
    <property type="match status" value="1"/>
</dbReference>
<dbReference type="SUPFAM" id="SSF52540">
    <property type="entry name" value="P-loop containing nucleoside triphosphate hydrolases"/>
    <property type="match status" value="1"/>
</dbReference>
<dbReference type="PROSITE" id="PS51419">
    <property type="entry name" value="RAB"/>
    <property type="match status" value="1"/>
</dbReference>
<sequence length="218" mass="25043">MKEKTTATTTTTTIPTRNADDDYELIKVLMLGDYKTGKGSVLRRYHYNEFELGVSSIGVDFVIRDYGIVNGKYYKIQIWDANSCERFRSITQAYYRGAHGFMLLYDCTNQESFNNLQFWINEIINKSPNSNNSTIVIIGNKCDLVNDIKIDPIKSKLFCDSKSITSFQNVSAKDSININEPFEILFKQIIEKGHSQTISPKLIKQRYENNNNKSCNIL</sequence>
<reference key="1">
    <citation type="journal article" date="2005" name="Nature">
        <title>The genome of the social amoeba Dictyostelium discoideum.</title>
        <authorList>
            <person name="Eichinger L."/>
            <person name="Pachebat J.A."/>
            <person name="Gloeckner G."/>
            <person name="Rajandream M.A."/>
            <person name="Sucgang R."/>
            <person name="Berriman M."/>
            <person name="Song J."/>
            <person name="Olsen R."/>
            <person name="Szafranski K."/>
            <person name="Xu Q."/>
            <person name="Tunggal B."/>
            <person name="Kummerfeld S."/>
            <person name="Madera M."/>
            <person name="Konfortov B.A."/>
            <person name="Rivero F."/>
            <person name="Bankier A.T."/>
            <person name="Lehmann R."/>
            <person name="Hamlin N."/>
            <person name="Davies R."/>
            <person name="Gaudet P."/>
            <person name="Fey P."/>
            <person name="Pilcher K."/>
            <person name="Chen G."/>
            <person name="Saunders D."/>
            <person name="Sodergren E.J."/>
            <person name="Davis P."/>
            <person name="Kerhornou A."/>
            <person name="Nie X."/>
            <person name="Hall N."/>
            <person name="Anjard C."/>
            <person name="Hemphill L."/>
            <person name="Bason N."/>
            <person name="Farbrother P."/>
            <person name="Desany B."/>
            <person name="Just E."/>
            <person name="Morio T."/>
            <person name="Rost R."/>
            <person name="Churcher C.M."/>
            <person name="Cooper J."/>
            <person name="Haydock S."/>
            <person name="van Driessche N."/>
            <person name="Cronin A."/>
            <person name="Goodhead I."/>
            <person name="Muzny D.M."/>
            <person name="Mourier T."/>
            <person name="Pain A."/>
            <person name="Lu M."/>
            <person name="Harper D."/>
            <person name="Lindsay R."/>
            <person name="Hauser H."/>
            <person name="James K.D."/>
            <person name="Quiles M."/>
            <person name="Madan Babu M."/>
            <person name="Saito T."/>
            <person name="Buchrieser C."/>
            <person name="Wardroper A."/>
            <person name="Felder M."/>
            <person name="Thangavelu M."/>
            <person name="Johnson D."/>
            <person name="Knights A."/>
            <person name="Loulseged H."/>
            <person name="Mungall K.L."/>
            <person name="Oliver K."/>
            <person name="Price C."/>
            <person name="Quail M.A."/>
            <person name="Urushihara H."/>
            <person name="Hernandez J."/>
            <person name="Rabbinowitsch E."/>
            <person name="Steffen D."/>
            <person name="Sanders M."/>
            <person name="Ma J."/>
            <person name="Kohara Y."/>
            <person name="Sharp S."/>
            <person name="Simmonds M.N."/>
            <person name="Spiegler S."/>
            <person name="Tivey A."/>
            <person name="Sugano S."/>
            <person name="White B."/>
            <person name="Walker D."/>
            <person name="Woodward J.R."/>
            <person name="Winckler T."/>
            <person name="Tanaka Y."/>
            <person name="Shaulsky G."/>
            <person name="Schleicher M."/>
            <person name="Weinstock G.M."/>
            <person name="Rosenthal A."/>
            <person name="Cox E.C."/>
            <person name="Chisholm R.L."/>
            <person name="Gibbs R.A."/>
            <person name="Loomis W.F."/>
            <person name="Platzer M."/>
            <person name="Kay R.R."/>
            <person name="Williams J.G."/>
            <person name="Dear P.H."/>
            <person name="Noegel A.A."/>
            <person name="Barrell B.G."/>
            <person name="Kuspa A."/>
        </authorList>
    </citation>
    <scope>NUCLEOTIDE SEQUENCE [LARGE SCALE GENOMIC DNA]</scope>
    <source>
        <strain>AX4</strain>
    </source>
</reference>
<comment type="subcellular location">
    <subcellularLocation>
        <location evidence="3">Cell membrane</location>
        <topology evidence="3">Lipid-anchor</topology>
        <orientation evidence="3">Cytoplasmic side</orientation>
    </subcellularLocation>
</comment>
<comment type="similarity">
    <text evidence="3">Belongs to the small GTPase superfamily. Rab family.</text>
</comment>
<accession>Q55EF0</accession>
<organism>
    <name type="scientific">Dictyostelium discoideum</name>
    <name type="common">Social amoeba</name>
    <dbReference type="NCBI Taxonomy" id="44689"/>
    <lineage>
        <taxon>Eukaryota</taxon>
        <taxon>Amoebozoa</taxon>
        <taxon>Evosea</taxon>
        <taxon>Eumycetozoa</taxon>
        <taxon>Dictyostelia</taxon>
        <taxon>Dictyosteliales</taxon>
        <taxon>Dictyosteliaceae</taxon>
        <taxon>Dictyostelium</taxon>
    </lineage>
</organism>
<protein>
    <recommendedName>
        <fullName>Ras-related protein RabT2</fullName>
    </recommendedName>
</protein>
<evidence type="ECO:0000250" key="1"/>
<evidence type="ECO:0000255" key="2"/>
<evidence type="ECO:0000305" key="3"/>
<gene>
    <name type="primary">rabT2</name>
    <name type="ORF">DDB_G0269262</name>
</gene>